<comment type="function">
    <text evidence="1">Specifically dimethylates two adjacent adenosines (A1518 and A1519) in the loop of a conserved hairpin near the 3'-end of 16S rRNA in the 30S particle. May play a critical role in biogenesis of 30S subunits.</text>
</comment>
<comment type="catalytic activity">
    <reaction evidence="1">
        <text>adenosine(1518)/adenosine(1519) in 16S rRNA + 4 S-adenosyl-L-methionine = N(6)-dimethyladenosine(1518)/N(6)-dimethyladenosine(1519) in 16S rRNA + 4 S-adenosyl-L-homocysteine + 4 H(+)</text>
        <dbReference type="Rhea" id="RHEA:19609"/>
        <dbReference type="Rhea" id="RHEA-COMP:10232"/>
        <dbReference type="Rhea" id="RHEA-COMP:10233"/>
        <dbReference type="ChEBI" id="CHEBI:15378"/>
        <dbReference type="ChEBI" id="CHEBI:57856"/>
        <dbReference type="ChEBI" id="CHEBI:59789"/>
        <dbReference type="ChEBI" id="CHEBI:74411"/>
        <dbReference type="ChEBI" id="CHEBI:74493"/>
        <dbReference type="EC" id="2.1.1.182"/>
    </reaction>
</comment>
<comment type="subcellular location">
    <subcellularLocation>
        <location evidence="1">Cytoplasm</location>
    </subcellularLocation>
</comment>
<comment type="similarity">
    <text evidence="1">Belongs to the class I-like SAM-binding methyltransferase superfamily. rRNA adenine N(6)-methyltransferase family. RsmA subfamily.</text>
</comment>
<reference key="1">
    <citation type="journal article" date="2009" name="PLoS Genet.">
        <title>Organised genome dynamics in the Escherichia coli species results in highly diverse adaptive paths.</title>
        <authorList>
            <person name="Touchon M."/>
            <person name="Hoede C."/>
            <person name="Tenaillon O."/>
            <person name="Barbe V."/>
            <person name="Baeriswyl S."/>
            <person name="Bidet P."/>
            <person name="Bingen E."/>
            <person name="Bonacorsi S."/>
            <person name="Bouchier C."/>
            <person name="Bouvet O."/>
            <person name="Calteau A."/>
            <person name="Chiapello H."/>
            <person name="Clermont O."/>
            <person name="Cruveiller S."/>
            <person name="Danchin A."/>
            <person name="Diard M."/>
            <person name="Dossat C."/>
            <person name="Karoui M.E."/>
            <person name="Frapy E."/>
            <person name="Garry L."/>
            <person name="Ghigo J.M."/>
            <person name="Gilles A.M."/>
            <person name="Johnson J."/>
            <person name="Le Bouguenec C."/>
            <person name="Lescat M."/>
            <person name="Mangenot S."/>
            <person name="Martinez-Jehanne V."/>
            <person name="Matic I."/>
            <person name="Nassif X."/>
            <person name="Oztas S."/>
            <person name="Petit M.A."/>
            <person name="Pichon C."/>
            <person name="Rouy Z."/>
            <person name="Ruf C.S."/>
            <person name="Schneider D."/>
            <person name="Tourret J."/>
            <person name="Vacherie B."/>
            <person name="Vallenet D."/>
            <person name="Medigue C."/>
            <person name="Rocha E.P.C."/>
            <person name="Denamur E."/>
        </authorList>
    </citation>
    <scope>NUCLEOTIDE SEQUENCE [LARGE SCALE GENOMIC DNA]</scope>
    <source>
        <strain>ED1a</strain>
    </source>
</reference>
<protein>
    <recommendedName>
        <fullName evidence="1">Ribosomal RNA small subunit methyltransferase A</fullName>
        <ecNumber evidence="1">2.1.1.182</ecNumber>
    </recommendedName>
    <alternativeName>
        <fullName evidence="1">16S rRNA (adenine(1518)-N(6)/adenine(1519)-N(6))-dimethyltransferase</fullName>
    </alternativeName>
    <alternativeName>
        <fullName evidence="1">16S rRNA dimethyladenosine transferase</fullName>
    </alternativeName>
    <alternativeName>
        <fullName evidence="1">16S rRNA dimethylase</fullName>
    </alternativeName>
    <alternativeName>
        <fullName evidence="1">S-adenosylmethionine-6-N', N'-adenosyl(rRNA) dimethyltransferase</fullName>
    </alternativeName>
</protein>
<name>RSMA_ECO81</name>
<sequence>MNNRVHQGHLARKRFGQNFLNDQFVIDSIVSAINPQKGQAMVEIGPGLAALTEPVGERLDQLTVIELDRDLAARLQTHPFLGPKLTIYQQDAMTFNFGELAAKMGQPLRVFGNLPYNISTPLMFHLFSYTDAIADMHFMLQKEVVNRLVAGPNSKAYGRLSVMAQYYCNVIPVLEVPPSAFTPPPKVDSAVVRLVPHATMPHPVKDVRVLSRITTEAFNQRRKTIRNSLGNLFSAEVLTGMGIDPAMRAENISVAQYCQMANYLAENAPLQES</sequence>
<proteinExistence type="inferred from homology"/>
<dbReference type="EC" id="2.1.1.182" evidence="1"/>
<dbReference type="EMBL" id="CU928162">
    <property type="protein sequence ID" value="CAR06275.1"/>
    <property type="molecule type" value="Genomic_DNA"/>
</dbReference>
<dbReference type="RefSeq" id="WP_001065362.1">
    <property type="nucleotide sequence ID" value="NC_011745.1"/>
</dbReference>
<dbReference type="SMR" id="B7MNR0"/>
<dbReference type="KEGG" id="ecq:ECED1_0052"/>
<dbReference type="HOGENOM" id="CLU_041220_0_1_6"/>
<dbReference type="Proteomes" id="UP000000748">
    <property type="component" value="Chromosome"/>
</dbReference>
<dbReference type="GO" id="GO:0005829">
    <property type="term" value="C:cytosol"/>
    <property type="evidence" value="ECO:0007669"/>
    <property type="project" value="TreeGrafter"/>
</dbReference>
<dbReference type="GO" id="GO:0052908">
    <property type="term" value="F:16S rRNA (adenine(1518)-N(6)/adenine(1519)-N(6))-dimethyltransferase activity"/>
    <property type="evidence" value="ECO:0007669"/>
    <property type="project" value="UniProtKB-EC"/>
</dbReference>
<dbReference type="GO" id="GO:0003723">
    <property type="term" value="F:RNA binding"/>
    <property type="evidence" value="ECO:0007669"/>
    <property type="project" value="UniProtKB-KW"/>
</dbReference>
<dbReference type="FunFam" id="1.10.8.100:FF:000001">
    <property type="entry name" value="Ribosomal RNA small subunit methyltransferase A"/>
    <property type="match status" value="1"/>
</dbReference>
<dbReference type="FunFam" id="3.40.50.150:FF:000006">
    <property type="entry name" value="Ribosomal RNA small subunit methyltransferase A"/>
    <property type="match status" value="1"/>
</dbReference>
<dbReference type="Gene3D" id="1.10.8.100">
    <property type="entry name" value="Ribosomal RNA adenine dimethylase-like, domain 2"/>
    <property type="match status" value="1"/>
</dbReference>
<dbReference type="Gene3D" id="3.40.50.150">
    <property type="entry name" value="Vaccinia Virus protein VP39"/>
    <property type="match status" value="1"/>
</dbReference>
<dbReference type="HAMAP" id="MF_00607">
    <property type="entry name" value="16SrRNA_methyltr_A"/>
    <property type="match status" value="1"/>
</dbReference>
<dbReference type="InterPro" id="IPR001737">
    <property type="entry name" value="KsgA/Erm"/>
</dbReference>
<dbReference type="InterPro" id="IPR023165">
    <property type="entry name" value="rRNA_Ade_diMease-like_C"/>
</dbReference>
<dbReference type="InterPro" id="IPR020596">
    <property type="entry name" value="rRNA_Ade_Mease_Trfase_CS"/>
</dbReference>
<dbReference type="InterPro" id="IPR020598">
    <property type="entry name" value="rRNA_Ade_methylase_Trfase_N"/>
</dbReference>
<dbReference type="InterPro" id="IPR011530">
    <property type="entry name" value="rRNA_adenine_dimethylase"/>
</dbReference>
<dbReference type="InterPro" id="IPR029063">
    <property type="entry name" value="SAM-dependent_MTases_sf"/>
</dbReference>
<dbReference type="NCBIfam" id="TIGR00755">
    <property type="entry name" value="ksgA"/>
    <property type="match status" value="1"/>
</dbReference>
<dbReference type="PANTHER" id="PTHR11727">
    <property type="entry name" value="DIMETHYLADENOSINE TRANSFERASE"/>
    <property type="match status" value="1"/>
</dbReference>
<dbReference type="PANTHER" id="PTHR11727:SF7">
    <property type="entry name" value="DIMETHYLADENOSINE TRANSFERASE-RELATED"/>
    <property type="match status" value="1"/>
</dbReference>
<dbReference type="Pfam" id="PF00398">
    <property type="entry name" value="RrnaAD"/>
    <property type="match status" value="1"/>
</dbReference>
<dbReference type="SMART" id="SM00650">
    <property type="entry name" value="rADc"/>
    <property type="match status" value="1"/>
</dbReference>
<dbReference type="SUPFAM" id="SSF53335">
    <property type="entry name" value="S-adenosyl-L-methionine-dependent methyltransferases"/>
    <property type="match status" value="1"/>
</dbReference>
<dbReference type="PROSITE" id="PS01131">
    <property type="entry name" value="RRNA_A_DIMETH"/>
    <property type="match status" value="1"/>
</dbReference>
<dbReference type="PROSITE" id="PS51689">
    <property type="entry name" value="SAM_RNA_A_N6_MT"/>
    <property type="match status" value="1"/>
</dbReference>
<feature type="chain" id="PRO_1000194383" description="Ribosomal RNA small subunit methyltransferase A">
    <location>
        <begin position="1"/>
        <end position="273"/>
    </location>
</feature>
<feature type="binding site" evidence="1">
    <location>
        <position position="18"/>
    </location>
    <ligand>
        <name>S-adenosyl-L-methionine</name>
        <dbReference type="ChEBI" id="CHEBI:59789"/>
    </ligand>
</feature>
<feature type="binding site" evidence="1">
    <location>
        <position position="20"/>
    </location>
    <ligand>
        <name>S-adenosyl-L-methionine</name>
        <dbReference type="ChEBI" id="CHEBI:59789"/>
    </ligand>
</feature>
<feature type="binding site" evidence="1">
    <location>
        <position position="45"/>
    </location>
    <ligand>
        <name>S-adenosyl-L-methionine</name>
        <dbReference type="ChEBI" id="CHEBI:59789"/>
    </ligand>
</feature>
<feature type="binding site" evidence="1">
    <location>
        <position position="66"/>
    </location>
    <ligand>
        <name>S-adenosyl-L-methionine</name>
        <dbReference type="ChEBI" id="CHEBI:59789"/>
    </ligand>
</feature>
<feature type="binding site" evidence="1">
    <location>
        <position position="91"/>
    </location>
    <ligand>
        <name>S-adenosyl-L-methionine</name>
        <dbReference type="ChEBI" id="CHEBI:59789"/>
    </ligand>
</feature>
<feature type="binding site" evidence="1">
    <location>
        <position position="113"/>
    </location>
    <ligand>
        <name>S-adenosyl-L-methionine</name>
        <dbReference type="ChEBI" id="CHEBI:59789"/>
    </ligand>
</feature>
<accession>B7MNR0</accession>
<gene>
    <name evidence="1" type="primary">rsmA</name>
    <name evidence="1" type="synonym">ksgA</name>
    <name type="ordered locus">ECED1_0052</name>
</gene>
<evidence type="ECO:0000255" key="1">
    <source>
        <dbReference type="HAMAP-Rule" id="MF_00607"/>
    </source>
</evidence>
<keyword id="KW-0963">Cytoplasm</keyword>
<keyword id="KW-0489">Methyltransferase</keyword>
<keyword id="KW-0694">RNA-binding</keyword>
<keyword id="KW-0698">rRNA processing</keyword>
<keyword id="KW-0949">S-adenosyl-L-methionine</keyword>
<keyword id="KW-0808">Transferase</keyword>
<organism>
    <name type="scientific">Escherichia coli O81 (strain ED1a)</name>
    <dbReference type="NCBI Taxonomy" id="585397"/>
    <lineage>
        <taxon>Bacteria</taxon>
        <taxon>Pseudomonadati</taxon>
        <taxon>Pseudomonadota</taxon>
        <taxon>Gammaproteobacteria</taxon>
        <taxon>Enterobacterales</taxon>
        <taxon>Enterobacteriaceae</taxon>
        <taxon>Escherichia</taxon>
    </lineage>
</organism>